<proteinExistence type="inferred from homology"/>
<organism>
    <name type="scientific">Albidiferax ferrireducens (strain ATCC BAA-621 / DSM 15236 / T118)</name>
    <name type="common">Rhodoferax ferrireducens</name>
    <dbReference type="NCBI Taxonomy" id="338969"/>
    <lineage>
        <taxon>Bacteria</taxon>
        <taxon>Pseudomonadati</taxon>
        <taxon>Pseudomonadota</taxon>
        <taxon>Betaproteobacteria</taxon>
        <taxon>Burkholderiales</taxon>
        <taxon>Comamonadaceae</taxon>
        <taxon>Rhodoferax</taxon>
    </lineage>
</organism>
<gene>
    <name evidence="1" type="primary">aceK</name>
    <name type="ordered locus">Rfer_3840</name>
</gene>
<dbReference type="EC" id="2.7.11.5" evidence="1"/>
<dbReference type="EC" id="3.1.3.-" evidence="1"/>
<dbReference type="EMBL" id="CP000267">
    <property type="protein sequence ID" value="ABD71539.1"/>
    <property type="molecule type" value="Genomic_DNA"/>
</dbReference>
<dbReference type="RefSeq" id="WP_011466102.1">
    <property type="nucleotide sequence ID" value="NC_007908.1"/>
</dbReference>
<dbReference type="SMR" id="Q21RR4"/>
<dbReference type="STRING" id="338969.Rfer_3840"/>
<dbReference type="KEGG" id="rfr:Rfer_3840"/>
<dbReference type="eggNOG" id="COG4579">
    <property type="taxonomic scope" value="Bacteria"/>
</dbReference>
<dbReference type="HOGENOM" id="CLU_033804_1_1_4"/>
<dbReference type="OrthoDB" id="5287793at2"/>
<dbReference type="Proteomes" id="UP000008332">
    <property type="component" value="Chromosome"/>
</dbReference>
<dbReference type="GO" id="GO:0005737">
    <property type="term" value="C:cytoplasm"/>
    <property type="evidence" value="ECO:0007669"/>
    <property type="project" value="UniProtKB-SubCell"/>
</dbReference>
<dbReference type="GO" id="GO:0008772">
    <property type="term" value="F:[isocitrate dehydrogenase (NADP+)] kinase activity"/>
    <property type="evidence" value="ECO:0007669"/>
    <property type="project" value="UniProtKB-UniRule"/>
</dbReference>
<dbReference type="GO" id="GO:0016208">
    <property type="term" value="F:AMP binding"/>
    <property type="evidence" value="ECO:0007669"/>
    <property type="project" value="TreeGrafter"/>
</dbReference>
<dbReference type="GO" id="GO:0005524">
    <property type="term" value="F:ATP binding"/>
    <property type="evidence" value="ECO:0007669"/>
    <property type="project" value="UniProtKB-UniRule"/>
</dbReference>
<dbReference type="GO" id="GO:0004721">
    <property type="term" value="F:phosphoprotein phosphatase activity"/>
    <property type="evidence" value="ECO:0007669"/>
    <property type="project" value="UniProtKB-KW"/>
</dbReference>
<dbReference type="GO" id="GO:0004674">
    <property type="term" value="F:protein serine/threonine kinase activity"/>
    <property type="evidence" value="ECO:0007669"/>
    <property type="project" value="UniProtKB-KW"/>
</dbReference>
<dbReference type="GO" id="GO:0006006">
    <property type="term" value="P:glucose metabolic process"/>
    <property type="evidence" value="ECO:0007669"/>
    <property type="project" value="InterPro"/>
</dbReference>
<dbReference type="GO" id="GO:0006097">
    <property type="term" value="P:glyoxylate cycle"/>
    <property type="evidence" value="ECO:0007669"/>
    <property type="project" value="UniProtKB-UniRule"/>
</dbReference>
<dbReference type="GO" id="GO:0006099">
    <property type="term" value="P:tricarboxylic acid cycle"/>
    <property type="evidence" value="ECO:0007669"/>
    <property type="project" value="UniProtKB-UniRule"/>
</dbReference>
<dbReference type="HAMAP" id="MF_00747">
    <property type="entry name" value="AceK"/>
    <property type="match status" value="1"/>
</dbReference>
<dbReference type="InterPro" id="IPR046855">
    <property type="entry name" value="AceK_kinase"/>
</dbReference>
<dbReference type="InterPro" id="IPR046854">
    <property type="entry name" value="AceK_regulatory"/>
</dbReference>
<dbReference type="InterPro" id="IPR010452">
    <property type="entry name" value="Isocitrate_DH_AceK"/>
</dbReference>
<dbReference type="NCBIfam" id="NF002804">
    <property type="entry name" value="PRK02946.1"/>
    <property type="match status" value="1"/>
</dbReference>
<dbReference type="PANTHER" id="PTHR39559">
    <property type="match status" value="1"/>
</dbReference>
<dbReference type="PANTHER" id="PTHR39559:SF1">
    <property type="entry name" value="ISOCITRATE DEHYDROGENASE KINASE_PHOSPHATASE"/>
    <property type="match status" value="1"/>
</dbReference>
<dbReference type="Pfam" id="PF06315">
    <property type="entry name" value="AceK_kinase"/>
    <property type="match status" value="1"/>
</dbReference>
<dbReference type="Pfam" id="PF20423">
    <property type="entry name" value="AceK_regulatory"/>
    <property type="match status" value="1"/>
</dbReference>
<dbReference type="PIRSF" id="PIRSF000719">
    <property type="entry name" value="AceK"/>
    <property type="match status" value="1"/>
</dbReference>
<name>ACEK_ALBFT</name>
<protein>
    <recommendedName>
        <fullName evidence="1">Isocitrate dehydrogenase kinase/phosphatase</fullName>
        <shortName evidence="1">IDH kinase/phosphatase</shortName>
        <shortName evidence="1">IDHK/P</shortName>
        <ecNumber evidence="1">2.7.11.5</ecNumber>
        <ecNumber evidence="1">3.1.3.-</ecNumber>
    </recommendedName>
</protein>
<sequence>MFPTRLDSSLAYDIAKAMMDGFNRHYRLFRTESARAKHRFETADWHGQQRAQRDRIEFYDLRVRECFMRLAREFKADEQPMEVWQQVKLHYIGLLVDHHQPELAETFFNSVTTKILHHSYFQNDFIFVRPAVSTEYIENDESETSPTYRSYYPTHDSLAEVLVQMVLDFDLRCPFADLDSDAARVQAAMVEQLGEVKLRANFQLQVLSGLFFRNKGCYIVGKLINGFNEFPFALPVLYGRAGQLVIDAVLFGEDDLLMLFSFARAYFMVDMEIPSAYVQYLRSMMPRKPRNEIYNALGLAKQGKTLFYRDFLHHQRHSTDKFRIAPGIKGMVMLVFDLPSFPYVFKVIKDFYPPPKDTTREQIKAKYLLVKQHDRVGRMADTLEYSEVGFPRARFDDELIAELEKFAPSQLEISDRDGDGRIEVIIKHVYIERRMIPLNIYLQEAFDAGGANPDDTSPAALRAREQIERGVIEYGNALKDLVAANIFPGDMLWKNFGITRHGKVVFYDYDEIEYITDCNFRKVPQARNEEDEMSGEVWYRVGPKDVFPETFAPFLLGNPFVREVFMKHHAELLDAAFWQSHKERIQAGHVYDVFPYDQGKRFHPEISDAQVPSSI</sequence>
<feature type="chain" id="PRO_0000288297" description="Isocitrate dehydrogenase kinase/phosphatase">
    <location>
        <begin position="1"/>
        <end position="615"/>
    </location>
</feature>
<feature type="active site" evidence="1">
    <location>
        <position position="381"/>
    </location>
</feature>
<feature type="binding site" evidence="1">
    <location>
        <begin position="325"/>
        <end position="331"/>
    </location>
    <ligand>
        <name>ATP</name>
        <dbReference type="ChEBI" id="CHEBI:30616"/>
    </ligand>
</feature>
<feature type="binding site" evidence="1">
    <location>
        <position position="346"/>
    </location>
    <ligand>
        <name>ATP</name>
        <dbReference type="ChEBI" id="CHEBI:30616"/>
    </ligand>
</feature>
<accession>Q21RR4</accession>
<evidence type="ECO:0000255" key="1">
    <source>
        <dbReference type="HAMAP-Rule" id="MF_00747"/>
    </source>
</evidence>
<comment type="function">
    <text evidence="1">Bifunctional enzyme which can phosphorylate or dephosphorylate isocitrate dehydrogenase (IDH) on a specific serine residue. This is a regulatory mechanism which enables bacteria to bypass the Krebs cycle via the glyoxylate shunt in response to the source of carbon. When bacteria are grown on glucose, IDH is fully active and unphosphorylated, but when grown on acetate or ethanol, the activity of IDH declines drastically concomitant with its phosphorylation.</text>
</comment>
<comment type="catalytic activity">
    <reaction evidence="1">
        <text>L-seryl-[isocitrate dehydrogenase] + ATP = O-phospho-L-seryl-[isocitrate dehydrogenase] + ADP + H(+)</text>
        <dbReference type="Rhea" id="RHEA:43540"/>
        <dbReference type="Rhea" id="RHEA-COMP:10605"/>
        <dbReference type="Rhea" id="RHEA-COMP:10606"/>
        <dbReference type="ChEBI" id="CHEBI:15378"/>
        <dbReference type="ChEBI" id="CHEBI:29999"/>
        <dbReference type="ChEBI" id="CHEBI:30616"/>
        <dbReference type="ChEBI" id="CHEBI:83421"/>
        <dbReference type="ChEBI" id="CHEBI:456216"/>
        <dbReference type="EC" id="2.7.11.5"/>
    </reaction>
</comment>
<comment type="subcellular location">
    <subcellularLocation>
        <location evidence="1">Cytoplasm</location>
    </subcellularLocation>
</comment>
<comment type="similarity">
    <text evidence="1">Belongs to the AceK family.</text>
</comment>
<keyword id="KW-0067">ATP-binding</keyword>
<keyword id="KW-0963">Cytoplasm</keyword>
<keyword id="KW-0329">Glyoxylate bypass</keyword>
<keyword id="KW-0378">Hydrolase</keyword>
<keyword id="KW-0418">Kinase</keyword>
<keyword id="KW-0547">Nucleotide-binding</keyword>
<keyword id="KW-0904">Protein phosphatase</keyword>
<keyword id="KW-1185">Reference proteome</keyword>
<keyword id="KW-0723">Serine/threonine-protein kinase</keyword>
<keyword id="KW-0808">Transferase</keyword>
<keyword id="KW-0816">Tricarboxylic acid cycle</keyword>
<reference key="1">
    <citation type="submission" date="2006-02" db="EMBL/GenBank/DDBJ databases">
        <title>Complete sequence of chromosome of Rhodoferax ferrireducens DSM 15236.</title>
        <authorList>
            <person name="Copeland A."/>
            <person name="Lucas S."/>
            <person name="Lapidus A."/>
            <person name="Barry K."/>
            <person name="Detter J.C."/>
            <person name="Glavina del Rio T."/>
            <person name="Hammon N."/>
            <person name="Israni S."/>
            <person name="Pitluck S."/>
            <person name="Brettin T."/>
            <person name="Bruce D."/>
            <person name="Han C."/>
            <person name="Tapia R."/>
            <person name="Gilna P."/>
            <person name="Kiss H."/>
            <person name="Schmutz J."/>
            <person name="Larimer F."/>
            <person name="Land M."/>
            <person name="Kyrpides N."/>
            <person name="Ivanova N."/>
            <person name="Richardson P."/>
        </authorList>
    </citation>
    <scope>NUCLEOTIDE SEQUENCE [LARGE SCALE GENOMIC DNA]</scope>
    <source>
        <strain>ATCC BAA-621 / DSM 15236 / T118</strain>
    </source>
</reference>